<keyword id="KW-0472">Membrane</keyword>
<keyword id="KW-0602">Photosynthesis</keyword>
<keyword id="KW-0604">Photosystem II</keyword>
<keyword id="KW-0674">Reaction center</keyword>
<keyword id="KW-0793">Thylakoid</keyword>
<keyword id="KW-0812">Transmembrane</keyword>
<keyword id="KW-1133">Transmembrane helix</keyword>
<feature type="chain" id="PRO_0000306201" description="Photosystem II reaction center protein L">
    <location>
        <begin position="1"/>
        <end position="39"/>
    </location>
</feature>
<feature type="transmembrane region" description="Helical" evidence="1">
    <location>
        <begin position="18"/>
        <end position="38"/>
    </location>
</feature>
<proteinExistence type="inferred from homology"/>
<sequence>MERTPNPNNQPVELNRTSLYLGLLLVFVLGILFSSYFFN</sequence>
<gene>
    <name evidence="1" type="primary">psbL</name>
    <name type="ordered locus">Ava_1853</name>
</gene>
<protein>
    <recommendedName>
        <fullName evidence="1">Photosystem II reaction center protein L</fullName>
        <shortName evidence="1">PSII-L</shortName>
    </recommendedName>
</protein>
<accession>Q3MC11</accession>
<organism>
    <name type="scientific">Trichormus variabilis (strain ATCC 29413 / PCC 7937)</name>
    <name type="common">Anabaena variabilis</name>
    <dbReference type="NCBI Taxonomy" id="240292"/>
    <lineage>
        <taxon>Bacteria</taxon>
        <taxon>Bacillati</taxon>
        <taxon>Cyanobacteriota</taxon>
        <taxon>Cyanophyceae</taxon>
        <taxon>Nostocales</taxon>
        <taxon>Nostocaceae</taxon>
        <taxon>Trichormus</taxon>
    </lineage>
</organism>
<dbReference type="EMBL" id="CP000117">
    <property type="protein sequence ID" value="ABA21475.1"/>
    <property type="molecule type" value="Genomic_DNA"/>
</dbReference>
<dbReference type="SMR" id="Q3MC11"/>
<dbReference type="STRING" id="240292.Ava_1853"/>
<dbReference type="KEGG" id="ava:Ava_1853"/>
<dbReference type="eggNOG" id="ENOG5033AKP">
    <property type="taxonomic scope" value="Bacteria"/>
</dbReference>
<dbReference type="HOGENOM" id="CLU_214425_0_0_3"/>
<dbReference type="Proteomes" id="UP000002533">
    <property type="component" value="Chromosome"/>
</dbReference>
<dbReference type="GO" id="GO:0009539">
    <property type="term" value="C:photosystem II reaction center"/>
    <property type="evidence" value="ECO:0007669"/>
    <property type="project" value="InterPro"/>
</dbReference>
<dbReference type="GO" id="GO:0031676">
    <property type="term" value="C:plasma membrane-derived thylakoid membrane"/>
    <property type="evidence" value="ECO:0007669"/>
    <property type="project" value="UniProtKB-SubCell"/>
</dbReference>
<dbReference type="GO" id="GO:0015979">
    <property type="term" value="P:photosynthesis"/>
    <property type="evidence" value="ECO:0007669"/>
    <property type="project" value="UniProtKB-UniRule"/>
</dbReference>
<dbReference type="HAMAP" id="MF_01317">
    <property type="entry name" value="PSII_PsbL"/>
    <property type="match status" value="1"/>
</dbReference>
<dbReference type="InterPro" id="IPR003372">
    <property type="entry name" value="PSII_PsbL"/>
</dbReference>
<dbReference type="InterPro" id="IPR037266">
    <property type="entry name" value="PSII_PsbL_sf"/>
</dbReference>
<dbReference type="NCBIfam" id="NF001972">
    <property type="entry name" value="PRK00753.1"/>
    <property type="match status" value="1"/>
</dbReference>
<dbReference type="Pfam" id="PF02419">
    <property type="entry name" value="PsbL"/>
    <property type="match status" value="1"/>
</dbReference>
<dbReference type="SUPFAM" id="SSF161017">
    <property type="entry name" value="Photosystem II reaction center protein L, PsbL"/>
    <property type="match status" value="1"/>
</dbReference>
<evidence type="ECO:0000255" key="1">
    <source>
        <dbReference type="HAMAP-Rule" id="MF_01317"/>
    </source>
</evidence>
<reference key="1">
    <citation type="journal article" date="2014" name="Stand. Genomic Sci.">
        <title>Complete genome sequence of Anabaena variabilis ATCC 29413.</title>
        <authorList>
            <person name="Thiel T."/>
            <person name="Pratte B.S."/>
            <person name="Zhong J."/>
            <person name="Goodwin L."/>
            <person name="Copeland A."/>
            <person name="Lucas S."/>
            <person name="Han C."/>
            <person name="Pitluck S."/>
            <person name="Land M.L."/>
            <person name="Kyrpides N.C."/>
            <person name="Woyke T."/>
        </authorList>
    </citation>
    <scope>NUCLEOTIDE SEQUENCE [LARGE SCALE GENOMIC DNA]</scope>
    <source>
        <strain>ATCC 29413 / PCC 7937</strain>
    </source>
</reference>
<name>PSBL_TRIV2</name>
<comment type="function">
    <text evidence="1">One of the components of the core complex of photosystem II (PSII). PSII is a light-driven water:plastoquinone oxidoreductase that uses light energy to abstract electrons from H(2)O, generating O(2) and a proton gradient subsequently used for ATP formation. It consists of a core antenna complex that captures photons, and an electron transfer chain that converts photonic excitation into a charge separation. This subunit is found at the monomer-monomer interface and is required for correct PSII assembly and/or dimerization.</text>
</comment>
<comment type="subunit">
    <text evidence="1">PSII is composed of 1 copy each of membrane proteins PsbA, PsbB, PsbC, PsbD, PsbE, PsbF, PsbH, PsbI, PsbJ, PsbK, PsbL, PsbM, PsbT, PsbX, PsbY, PsbZ, Psb30/Ycf12, peripheral proteins PsbO, CyanoQ (PsbQ), PsbU, PsbV and a large number of cofactors. It forms dimeric complexes.</text>
</comment>
<comment type="subcellular location">
    <subcellularLocation>
        <location evidence="1">Cellular thylakoid membrane</location>
        <topology evidence="1">Single-pass membrane protein</topology>
    </subcellularLocation>
</comment>
<comment type="similarity">
    <text evidence="1">Belongs to the PsbL family.</text>
</comment>